<proteinExistence type="evidence at protein level"/>
<feature type="signal peptide" evidence="1">
    <location>
        <begin position="1"/>
        <end position="20"/>
    </location>
</feature>
<feature type="chain" id="PRO_0000031894" description="Iron ABC transporter substrate-binding lipoprotein MtsA">
    <location>
        <begin position="21"/>
        <end position="310"/>
    </location>
</feature>
<feature type="binding site" evidence="3 5">
    <location>
        <position position="68"/>
    </location>
    <ligand>
        <name>Fe(2+)</name>
        <dbReference type="ChEBI" id="CHEBI:29033"/>
    </ligand>
</feature>
<feature type="binding site" evidence="3 5">
    <location>
        <position position="140"/>
    </location>
    <ligand>
        <name>Fe(2+)</name>
        <dbReference type="ChEBI" id="CHEBI:29033"/>
    </ligand>
</feature>
<feature type="binding site" evidence="3 5">
    <location>
        <position position="206"/>
    </location>
    <ligand>
        <name>Fe(2+)</name>
        <dbReference type="ChEBI" id="CHEBI:29033"/>
    </ligand>
</feature>
<feature type="binding site" evidence="3 5">
    <location>
        <position position="281"/>
    </location>
    <ligand>
        <name>Fe(2+)</name>
        <dbReference type="ChEBI" id="CHEBI:29033"/>
    </ligand>
</feature>
<feature type="lipid moiety-binding region" description="N-palmitoyl cysteine" evidence="1">
    <location>
        <position position="21"/>
    </location>
</feature>
<feature type="lipid moiety-binding region" description="S-diacylglycerol cysteine" evidence="1">
    <location>
        <position position="21"/>
    </location>
</feature>
<feature type="sequence variant" description="In strain: AP1.">
    <original>V</original>
    <variation>A</variation>
    <location>
        <position position="77"/>
    </location>
</feature>
<feature type="mutagenesis site" description="46-fold decrease in affinity for Fe(2+). 100-fold decrease in affinity for Fe(2+); when associated with A-140, A-206 and A-281." evidence="3">
    <original>H</original>
    <variation>A</variation>
    <location>
        <position position="68"/>
    </location>
</feature>
<feature type="mutagenesis site" description="60-fold decrease in affinity for Fe(2+). 100-fold decrease in affinity for Fe(2+); when associated with A-68, A-206 and A-281." evidence="3">
    <original>H</original>
    <variation>A</variation>
    <location>
        <position position="140"/>
    </location>
</feature>
<feature type="mutagenesis site" description="1.5-fold decrease in affinity for Fe(2+). 100-fold decrease in affinity for Fe(2+); when associated with A-68, A-140 and A-281." evidence="3">
    <original>E</original>
    <variation>A</variation>
    <location>
        <position position="206"/>
    </location>
</feature>
<feature type="mutagenesis site" description="18-fold decrease in affinity for Fe(2+). 100-fold decrease in affinity for Fe(2+); when associated with A-68, A-140 and A-206." evidence="3">
    <original>D</original>
    <variation>A</variation>
    <location>
        <position position="281"/>
    </location>
</feature>
<feature type="sequence conflict" description="In Ref. 1; AAD56936/AAD56939." evidence="4" ref="1">
    <original>T</original>
    <variation>A</variation>
    <location>
        <position position="26"/>
    </location>
</feature>
<feature type="sequence conflict" description="In Ref. 1; AAD56936." evidence="4" ref="1">
    <original>K</original>
    <variation>E</variation>
    <location>
        <position position="30"/>
    </location>
</feature>
<feature type="sequence conflict" description="In Ref. 1; AAD56936." evidence="4" ref="1">
    <original>A</original>
    <variation>G</variation>
    <location>
        <position position="44"/>
    </location>
</feature>
<feature type="sequence conflict" description="In Ref. 1; AAD56936." evidence="4" ref="1">
    <original>AI</original>
    <variation>VM</variation>
    <location>
        <begin position="49"/>
        <end position="50"/>
    </location>
</feature>
<feature type="strand" evidence="7">
    <location>
        <begin position="34"/>
        <end position="40"/>
    </location>
</feature>
<feature type="helix" evidence="7">
    <location>
        <begin position="41"/>
        <end position="51"/>
    </location>
</feature>
<feature type="strand" evidence="7">
    <location>
        <begin position="54"/>
        <end position="61"/>
    </location>
</feature>
<feature type="strand" evidence="7">
    <location>
        <begin position="67"/>
        <end position="69"/>
    </location>
</feature>
<feature type="helix" evidence="7">
    <location>
        <begin position="74"/>
        <end position="82"/>
    </location>
</feature>
<feature type="strand" evidence="7">
    <location>
        <begin position="84"/>
        <end position="88"/>
    </location>
</feature>
<feature type="helix" evidence="7">
    <location>
        <begin position="100"/>
        <end position="107"/>
    </location>
</feature>
<feature type="turn" evidence="7">
    <location>
        <begin position="112"/>
        <end position="114"/>
    </location>
</feature>
<feature type="strand" evidence="7">
    <location>
        <begin position="115"/>
        <end position="118"/>
    </location>
</feature>
<feature type="turn" evidence="7">
    <location>
        <begin position="119"/>
        <end position="122"/>
    </location>
</feature>
<feature type="helix" evidence="7">
    <location>
        <begin position="131"/>
        <end position="133"/>
    </location>
</feature>
<feature type="helix" evidence="7">
    <location>
        <begin position="141"/>
        <end position="143"/>
    </location>
</feature>
<feature type="helix" evidence="7">
    <location>
        <begin position="145"/>
        <end position="162"/>
    </location>
</feature>
<feature type="helix" evidence="7">
    <location>
        <begin position="164"/>
        <end position="166"/>
    </location>
</feature>
<feature type="helix" evidence="7">
    <location>
        <begin position="167"/>
        <end position="190"/>
    </location>
</feature>
<feature type="turn" evidence="7">
    <location>
        <begin position="191"/>
        <end position="194"/>
    </location>
</feature>
<feature type="helix" evidence="6">
    <location>
        <begin position="197"/>
        <end position="199"/>
    </location>
</feature>
<feature type="strand" evidence="7">
    <location>
        <begin position="202"/>
        <end position="206"/>
    </location>
</feature>
<feature type="helix" evidence="7">
    <location>
        <begin position="210"/>
        <end position="216"/>
    </location>
</feature>
<feature type="strand" evidence="7">
    <location>
        <begin position="220"/>
        <end position="226"/>
    </location>
</feature>
<feature type="helix" evidence="7">
    <location>
        <begin position="234"/>
        <end position="246"/>
    </location>
</feature>
<feature type="strand" evidence="7">
    <location>
        <begin position="252"/>
        <end position="255"/>
    </location>
</feature>
<feature type="helix" evidence="7">
    <location>
        <begin position="261"/>
        <end position="270"/>
    </location>
</feature>
<feature type="strand" evidence="7">
    <location>
        <begin position="274"/>
        <end position="278"/>
    </location>
</feature>
<feature type="strand" evidence="6">
    <location>
        <begin position="280"/>
        <end position="282"/>
    </location>
</feature>
<feature type="helix" evidence="7">
    <location>
        <begin position="293"/>
        <end position="309"/>
    </location>
</feature>
<keyword id="KW-0002">3D-structure</keyword>
<keyword id="KW-1003">Cell membrane</keyword>
<keyword id="KW-0903">Direct protein sequencing</keyword>
<keyword id="KW-0406">Ion transport</keyword>
<keyword id="KW-0408">Iron</keyword>
<keyword id="KW-0410">Iron transport</keyword>
<keyword id="KW-0449">Lipoprotein</keyword>
<keyword id="KW-0472">Membrane</keyword>
<keyword id="KW-0479">Metal-binding</keyword>
<keyword id="KW-0564">Palmitate</keyword>
<keyword id="KW-1185">Reference proteome</keyword>
<keyword id="KW-0732">Signal</keyword>
<keyword id="KW-0813">Transport</keyword>
<reference key="1">
    <citation type="journal article" date="1999" name="Mol. Microbiol.">
        <title>Identification and characterization of a Streptococcus pyogenes ABC transporter with multiple specificity for metal cations.</title>
        <authorList>
            <person name="Janulczyk R."/>
            <person name="Pallon J."/>
            <person name="Bjoerck L."/>
        </authorList>
    </citation>
    <scope>NUCLEOTIDE SEQUENCE [GENOMIC DNA]</scope>
    <scope>PROTEIN SEQUENCE OF 30-39</scope>
    <scope>FUNCTION</scope>
    <source>
        <strain>AP1 / Serotype M1</strain>
        <strain>ATCC 700294 / SF370 / Serotype M1</strain>
    </source>
</reference>
<reference key="2">
    <citation type="journal article" date="2001" name="Proc. Natl. Acad. Sci. U.S.A.">
        <title>Complete genome sequence of an M1 strain of Streptococcus pyogenes.</title>
        <authorList>
            <person name="Ferretti J.J."/>
            <person name="McShan W.M."/>
            <person name="Ajdic D.J."/>
            <person name="Savic D.J."/>
            <person name="Savic G."/>
            <person name="Lyon K."/>
            <person name="Primeaux C."/>
            <person name="Sezate S."/>
            <person name="Suvorov A.N."/>
            <person name="Kenton S."/>
            <person name="Lai H.S."/>
            <person name="Lin S.P."/>
            <person name="Qian Y."/>
            <person name="Jia H.G."/>
            <person name="Najar F.Z."/>
            <person name="Ren Q."/>
            <person name="Zhu H."/>
            <person name="Song L."/>
            <person name="White J."/>
            <person name="Yuan X."/>
            <person name="Clifton S.W."/>
            <person name="Roe B.A."/>
            <person name="McLaughlin R.E."/>
        </authorList>
    </citation>
    <scope>NUCLEOTIDE SEQUENCE [LARGE SCALE GENOMIC DNA]</scope>
    <source>
        <strain>ATCC 700294 / SF370 / Serotype M1</strain>
    </source>
</reference>
<reference key="3">
    <citation type="journal article" date="2005" name="J. Infect. Dis.">
        <title>Evolutionary origin and emergence of a highly successful clone of serotype M1 group A Streptococcus involved multiple horizontal gene transfer events.</title>
        <authorList>
            <person name="Sumby P."/>
            <person name="Porcella S.F."/>
            <person name="Madrigal A.G."/>
            <person name="Barbian K.D."/>
            <person name="Virtaneva K."/>
            <person name="Ricklefs S.M."/>
            <person name="Sturdevant D.E."/>
            <person name="Graham M.R."/>
            <person name="Vuopio-Varkila J."/>
            <person name="Hoe N.P."/>
            <person name="Musser J.M."/>
        </authorList>
    </citation>
    <scope>NUCLEOTIDE SEQUENCE [LARGE SCALE GENOMIC DNA]</scope>
    <source>
        <strain>ATCC BAA-947 / MGAS5005 / Serotype M1</strain>
    </source>
</reference>
<reference evidence="5" key="4">
    <citation type="journal article" date="2009" name="Biochemistry">
        <title>Crystal structure and metal binding properties of the lipoprotein MtsA, responsible for iron transport in Streptococcus pyogenes.</title>
        <authorList>
            <person name="Sun X."/>
            <person name="Baker H.M."/>
            <person name="Ge R."/>
            <person name="Sun H."/>
            <person name="He Q.Y."/>
            <person name="Baker E.N."/>
        </authorList>
    </citation>
    <scope>X-RAY CRYSTALLOGRAPHY (1.87 ANGSTROMS) OF 22-310 IN COMPLEX WITH IRON</scope>
    <scope>FUNCTION</scope>
    <scope>MUTAGENESIS OF HIS-68; HIS-140; GLU-206 AND ASP-281</scope>
</reference>
<accession>P0A4G4</accession>
<accession>Q490I2</accession>
<accession>Q9A157</accession>
<accession>Q9RNI7</accession>
<accession>Q9RNJ0</accession>
<evidence type="ECO:0000255" key="1">
    <source>
        <dbReference type="PROSITE-ProRule" id="PRU00303"/>
    </source>
</evidence>
<evidence type="ECO:0000269" key="2">
    <source>
    </source>
</evidence>
<evidence type="ECO:0000269" key="3">
    <source>
    </source>
</evidence>
<evidence type="ECO:0000305" key="4"/>
<evidence type="ECO:0007744" key="5">
    <source>
        <dbReference type="PDB" id="3HH8"/>
    </source>
</evidence>
<evidence type="ECO:0007829" key="6">
    <source>
        <dbReference type="PDB" id="3HH8"/>
    </source>
</evidence>
<evidence type="ECO:0007829" key="7">
    <source>
        <dbReference type="PDB" id="8YJ8"/>
    </source>
</evidence>
<dbReference type="EMBL" id="AF180520">
    <property type="protein sequence ID" value="AAD56936.1"/>
    <property type="molecule type" value="Genomic_DNA"/>
</dbReference>
<dbReference type="EMBL" id="AF180521">
    <property type="protein sequence ID" value="AAD56939.1"/>
    <property type="molecule type" value="Genomic_DNA"/>
</dbReference>
<dbReference type="EMBL" id="AE004092">
    <property type="protein sequence ID" value="AAK33468.1"/>
    <property type="molecule type" value="Genomic_DNA"/>
</dbReference>
<dbReference type="EMBL" id="CP000017">
    <property type="protein sequence ID" value="AAZ50986.1"/>
    <property type="status" value="ALT_INIT"/>
    <property type="molecule type" value="Genomic_DNA"/>
</dbReference>
<dbReference type="RefSeq" id="NP_268747.1">
    <property type="nucleotide sequence ID" value="NC_002737.2"/>
</dbReference>
<dbReference type="PDB" id="3HH8">
    <property type="method" value="X-ray"/>
    <property type="resolution" value="1.87 A"/>
    <property type="chains" value="A=22-310"/>
</dbReference>
<dbReference type="PDB" id="8YJ5">
    <property type="method" value="X-ray"/>
    <property type="resolution" value="3.66 A"/>
    <property type="chains" value="A=32-310"/>
</dbReference>
<dbReference type="PDB" id="8YJ6">
    <property type="method" value="X-ray"/>
    <property type="resolution" value="1.37 A"/>
    <property type="chains" value="C=32-310"/>
</dbReference>
<dbReference type="PDB" id="8YJ7">
    <property type="method" value="X-ray"/>
    <property type="resolution" value="2.80 A"/>
    <property type="chains" value="A/B/C/D=32-310"/>
</dbReference>
<dbReference type="PDB" id="8YJ8">
    <property type="method" value="X-ray"/>
    <property type="resolution" value="1.65 A"/>
    <property type="chains" value="A/B=31-310"/>
</dbReference>
<dbReference type="PDBsum" id="3HH8"/>
<dbReference type="PDBsum" id="8YJ5"/>
<dbReference type="PDBsum" id="8YJ6"/>
<dbReference type="PDBsum" id="8YJ7"/>
<dbReference type="PDBsum" id="8YJ8"/>
<dbReference type="SMR" id="P0A4G4"/>
<dbReference type="TCDB" id="3.A.1.15.6">
    <property type="family name" value="the atp-binding cassette (abc) superfamily"/>
</dbReference>
<dbReference type="PaxDb" id="1314-HKU360_00400"/>
<dbReference type="KEGG" id="spy:SPy_0453"/>
<dbReference type="KEGG" id="spz:M5005_Spy0368"/>
<dbReference type="PATRIC" id="fig|160490.10.peg.382"/>
<dbReference type="HOGENOM" id="CLU_016838_1_1_9"/>
<dbReference type="OMA" id="DPHIWFD"/>
<dbReference type="EvolutionaryTrace" id="P0A4G4"/>
<dbReference type="Proteomes" id="UP000000750">
    <property type="component" value="Chromosome"/>
</dbReference>
<dbReference type="GO" id="GO:0005886">
    <property type="term" value="C:plasma membrane"/>
    <property type="evidence" value="ECO:0007669"/>
    <property type="project" value="UniProtKB-SubCell"/>
</dbReference>
<dbReference type="GO" id="GO:0046872">
    <property type="term" value="F:metal ion binding"/>
    <property type="evidence" value="ECO:0007669"/>
    <property type="project" value="UniProtKB-KW"/>
</dbReference>
<dbReference type="GO" id="GO:0007155">
    <property type="term" value="P:cell adhesion"/>
    <property type="evidence" value="ECO:0007669"/>
    <property type="project" value="InterPro"/>
</dbReference>
<dbReference type="GO" id="GO:0006826">
    <property type="term" value="P:iron ion transport"/>
    <property type="evidence" value="ECO:0007669"/>
    <property type="project" value="UniProtKB-KW"/>
</dbReference>
<dbReference type="CDD" id="cd01137">
    <property type="entry name" value="PsaA"/>
    <property type="match status" value="1"/>
</dbReference>
<dbReference type="Gene3D" id="3.40.50.1980">
    <property type="entry name" value="Nitrogenase molybdenum iron protein domain"/>
    <property type="match status" value="2"/>
</dbReference>
<dbReference type="InterPro" id="IPR006129">
    <property type="entry name" value="AdhesinB"/>
</dbReference>
<dbReference type="InterPro" id="IPR050492">
    <property type="entry name" value="Bact_metal-bind_prot9"/>
</dbReference>
<dbReference type="InterPro" id="IPR006128">
    <property type="entry name" value="Lipoprotein_PsaA-like"/>
</dbReference>
<dbReference type="InterPro" id="IPR006127">
    <property type="entry name" value="ZnuA-like"/>
</dbReference>
<dbReference type="NCBIfam" id="NF040928">
    <property type="entry name" value="ABC_lipo_SloC"/>
    <property type="match status" value="1"/>
</dbReference>
<dbReference type="PANTHER" id="PTHR42953">
    <property type="entry name" value="HIGH-AFFINITY ZINC UPTAKE SYSTEM PROTEIN ZNUA-RELATED"/>
    <property type="match status" value="1"/>
</dbReference>
<dbReference type="PANTHER" id="PTHR42953:SF1">
    <property type="entry name" value="METAL-BINDING PROTEIN HI_0362-RELATED"/>
    <property type="match status" value="1"/>
</dbReference>
<dbReference type="Pfam" id="PF01297">
    <property type="entry name" value="ZnuA"/>
    <property type="match status" value="1"/>
</dbReference>
<dbReference type="PRINTS" id="PR00691">
    <property type="entry name" value="ADHESINB"/>
</dbReference>
<dbReference type="PRINTS" id="PR00690">
    <property type="entry name" value="ADHESNFAMILY"/>
</dbReference>
<dbReference type="SUPFAM" id="SSF53807">
    <property type="entry name" value="Helical backbone' metal receptor"/>
    <property type="match status" value="1"/>
</dbReference>
<dbReference type="PROSITE" id="PS51257">
    <property type="entry name" value="PROKAR_LIPOPROTEIN"/>
    <property type="match status" value="1"/>
</dbReference>
<name>MTSA_STRP1</name>
<protein>
    <recommendedName>
        <fullName evidence="4">Iron ABC transporter substrate-binding lipoprotein MtsA</fullName>
    </recommendedName>
</protein>
<organism>
    <name type="scientific">Streptococcus pyogenes serotype M1</name>
    <dbReference type="NCBI Taxonomy" id="301447"/>
    <lineage>
        <taxon>Bacteria</taxon>
        <taxon>Bacillati</taxon>
        <taxon>Bacillota</taxon>
        <taxon>Bacilli</taxon>
        <taxon>Lactobacillales</taxon>
        <taxon>Streptococcaceae</taxon>
        <taxon>Streptococcus</taxon>
    </lineage>
</organism>
<gene>
    <name type="primary">mtsA</name>
    <name type="ordered locus">SPy_0453</name>
    <name type="ordered locus">M5005_Spy0368</name>
</gene>
<sequence>MGKRMSLILGAFLSVFLLVACSSTGTKTAKSDKLKVVATNSIIADMTKAIAGDKIDLHSIVPIGQDPHEYEPLPEDVEKTSNADVIFYNGINLEDGGQAWFTKLVKNAQKTKNKDYFAVSDGIDVIYLEGASEKGKEDPHAWLNLENGIIYSKNIAKQLIAKDPKNKETYEKNLKAYVAKLEKLDKEAKSKFDAIAENKKLIVTSEGCFKYFSKAYGVPSAYIWEINTEEEGTPDQISSLIEKLKVIKPSALFVESSVDRRPMETVSKDSGIPIYSEIFTDSIAKKGKPGDSYYAMMKWNLDKISEGLAK</sequence>
<comment type="function">
    <text evidence="2 3">Part of the ATP-binding cassette (ABC) transport system MtsABC involved in iron import (PubMed:10564500, PubMed:19463017). Binds iron with high affinity and specificity and delivers it to the membrane permease for translocation into the cytoplasm (PubMed:19463017). Has low affinity for Zn(2+) and Cu(2+) (PubMed:10564500).</text>
</comment>
<comment type="subcellular location">
    <subcellularLocation>
        <location evidence="1">Cell membrane</location>
        <topology evidence="1">Lipid-anchor</topology>
    </subcellularLocation>
</comment>
<comment type="similarity">
    <text evidence="4">Belongs to the bacterial solute-binding protein 9 family. Lipoprotein receptor antigen (Lrai) subfamily.</text>
</comment>
<comment type="sequence caution" evidence="4">
    <conflict type="erroneous initiation">
        <sequence resource="EMBL-CDS" id="AAZ50986"/>
    </conflict>
</comment>